<accession>A7IA21</accession>
<comment type="function">
    <text evidence="1">S-adenosyl-L-methionine-dependent methyltransferase that catalyzes the trimethylation of the amino group of the modified target histidine residue in translation elongation factor 2 (EF-2), to form an intermediate called diphthine. The three successive methylation reactions represent the second step of diphthamide biosynthesis.</text>
</comment>
<comment type="catalytic activity">
    <reaction evidence="1">
        <text>2-[(3S)-amino-3-carboxypropyl]-L-histidyl-[translation elongation factor 2] + 3 S-adenosyl-L-methionine = diphthine-[translation elongation factor 2] + 3 S-adenosyl-L-homocysteine + 3 H(+)</text>
        <dbReference type="Rhea" id="RHEA:36415"/>
        <dbReference type="Rhea" id="RHEA-COMP:9749"/>
        <dbReference type="Rhea" id="RHEA-COMP:10172"/>
        <dbReference type="ChEBI" id="CHEBI:15378"/>
        <dbReference type="ChEBI" id="CHEBI:57856"/>
        <dbReference type="ChEBI" id="CHEBI:59789"/>
        <dbReference type="ChEBI" id="CHEBI:73995"/>
        <dbReference type="ChEBI" id="CHEBI:82696"/>
        <dbReference type="EC" id="2.1.1.98"/>
    </reaction>
</comment>
<comment type="pathway">
    <text evidence="1">Protein modification; peptidyl-diphthamide biosynthesis.</text>
</comment>
<comment type="subunit">
    <text evidence="1">Homodimer.</text>
</comment>
<comment type="similarity">
    <text evidence="1">Belongs to the diphthine synthase family.</text>
</comment>
<gene>
    <name evidence="1" type="primary">dphB</name>
    <name type="ordered locus">Mboo_2068</name>
</gene>
<dbReference type="EC" id="2.1.1.98" evidence="1"/>
<dbReference type="EMBL" id="CP000780">
    <property type="protein sequence ID" value="ABS56582.1"/>
    <property type="molecule type" value="Genomic_DNA"/>
</dbReference>
<dbReference type="RefSeq" id="WP_012107638.1">
    <property type="nucleotide sequence ID" value="NC_009712.1"/>
</dbReference>
<dbReference type="SMR" id="A7IA21"/>
<dbReference type="STRING" id="456442.Mboo_2068"/>
<dbReference type="GeneID" id="5409777"/>
<dbReference type="KEGG" id="mbn:Mboo_2068"/>
<dbReference type="eggNOG" id="arCOG04161">
    <property type="taxonomic scope" value="Archaea"/>
</dbReference>
<dbReference type="HOGENOM" id="CLU_066040_0_0_2"/>
<dbReference type="OrthoDB" id="39139at2157"/>
<dbReference type="UniPathway" id="UPA00559"/>
<dbReference type="Proteomes" id="UP000002408">
    <property type="component" value="Chromosome"/>
</dbReference>
<dbReference type="GO" id="GO:0004164">
    <property type="term" value="F:diphthine synthase activity"/>
    <property type="evidence" value="ECO:0007669"/>
    <property type="project" value="UniProtKB-UniRule"/>
</dbReference>
<dbReference type="GO" id="GO:0032259">
    <property type="term" value="P:methylation"/>
    <property type="evidence" value="ECO:0007669"/>
    <property type="project" value="UniProtKB-KW"/>
</dbReference>
<dbReference type="GO" id="GO:0017183">
    <property type="term" value="P:protein histidyl modification to diphthamide"/>
    <property type="evidence" value="ECO:0007669"/>
    <property type="project" value="UniProtKB-UniRule"/>
</dbReference>
<dbReference type="CDD" id="cd11647">
    <property type="entry name" value="DHP5_DphB"/>
    <property type="match status" value="1"/>
</dbReference>
<dbReference type="Gene3D" id="3.40.1010.10">
    <property type="entry name" value="Cobalt-precorrin-4 Transmethylase, Domain 1"/>
    <property type="match status" value="1"/>
</dbReference>
<dbReference type="Gene3D" id="3.30.950.10">
    <property type="entry name" value="Methyltransferase, Cobalt-precorrin-4 Transmethylase, Domain 2"/>
    <property type="match status" value="1"/>
</dbReference>
<dbReference type="HAMAP" id="MF_01084">
    <property type="entry name" value="Diphthine_synth"/>
    <property type="match status" value="1"/>
</dbReference>
<dbReference type="InterPro" id="IPR000878">
    <property type="entry name" value="4pyrrol_Mease"/>
</dbReference>
<dbReference type="InterPro" id="IPR035996">
    <property type="entry name" value="4pyrrol_Methylase_sf"/>
</dbReference>
<dbReference type="InterPro" id="IPR014777">
    <property type="entry name" value="4pyrrole_Mease_sub1"/>
</dbReference>
<dbReference type="InterPro" id="IPR014776">
    <property type="entry name" value="4pyrrole_Mease_sub2"/>
</dbReference>
<dbReference type="InterPro" id="IPR004551">
    <property type="entry name" value="Dphthn_synthase"/>
</dbReference>
<dbReference type="NCBIfam" id="TIGR00522">
    <property type="entry name" value="dph5"/>
    <property type="match status" value="1"/>
</dbReference>
<dbReference type="PANTHER" id="PTHR10882:SF0">
    <property type="entry name" value="DIPHTHINE METHYL ESTER SYNTHASE"/>
    <property type="match status" value="1"/>
</dbReference>
<dbReference type="PANTHER" id="PTHR10882">
    <property type="entry name" value="DIPHTHINE SYNTHASE"/>
    <property type="match status" value="1"/>
</dbReference>
<dbReference type="Pfam" id="PF00590">
    <property type="entry name" value="TP_methylase"/>
    <property type="match status" value="1"/>
</dbReference>
<dbReference type="PIRSF" id="PIRSF036432">
    <property type="entry name" value="Diphthine_synth"/>
    <property type="match status" value="1"/>
</dbReference>
<dbReference type="SUPFAM" id="SSF53790">
    <property type="entry name" value="Tetrapyrrole methylase"/>
    <property type="match status" value="1"/>
</dbReference>
<keyword id="KW-0489">Methyltransferase</keyword>
<keyword id="KW-1185">Reference proteome</keyword>
<keyword id="KW-0949">S-adenosyl-L-methionine</keyword>
<keyword id="KW-0808">Transferase</keyword>
<name>DPHB_METB6</name>
<sequence>MLTFIGLGLYDKTDVSEKGLAMIRSADYVFLEGYTSRLMGTNITELEAFYKKPVRLLLRADVEQHPDELLDCAARGNTVFLCAGDPMVSTTHADLRIRAAERGIPTAIIHGSSIVSAVCGLSGLQNYRFGKSCSVPFPQGNWAPSSPLDVILENRTNRLHTLVYLDIQDDRYMTVNEGICLLEAMAQKKQVAIPFYVGVARAGSETSLVRAGTAETLRSADFGPPLHILIVPGELHDMEREYLARFAGLC</sequence>
<reference key="1">
    <citation type="journal article" date="2015" name="Microbiology">
        <title>Genome of Methanoregula boonei 6A8 reveals adaptations to oligotrophic peatland environments.</title>
        <authorList>
            <person name="Braeuer S."/>
            <person name="Cadillo-Quiroz H."/>
            <person name="Kyrpides N."/>
            <person name="Woyke T."/>
            <person name="Goodwin L."/>
            <person name="Detter C."/>
            <person name="Podell S."/>
            <person name="Yavitt J.B."/>
            <person name="Zinder S.H."/>
        </authorList>
    </citation>
    <scope>NUCLEOTIDE SEQUENCE [LARGE SCALE GENOMIC DNA]</scope>
    <source>
        <strain>DSM 21154 / JCM 14090 / 6A8</strain>
    </source>
</reference>
<protein>
    <recommendedName>
        <fullName evidence="1">Diphthine synthase</fullName>
        <ecNumber evidence="1">2.1.1.98</ecNumber>
    </recommendedName>
    <alternativeName>
        <fullName evidence="1">Diphthamide biosynthesis methyltransferase</fullName>
    </alternativeName>
</protein>
<organism>
    <name type="scientific">Methanoregula boonei (strain DSM 21154 / JCM 14090 / 6A8)</name>
    <dbReference type="NCBI Taxonomy" id="456442"/>
    <lineage>
        <taxon>Archaea</taxon>
        <taxon>Methanobacteriati</taxon>
        <taxon>Methanobacteriota</taxon>
        <taxon>Stenosarchaea group</taxon>
        <taxon>Methanomicrobia</taxon>
        <taxon>Methanomicrobiales</taxon>
        <taxon>Methanoregulaceae</taxon>
        <taxon>Methanoregula</taxon>
    </lineage>
</organism>
<proteinExistence type="inferred from homology"/>
<feature type="chain" id="PRO_1000064816" description="Diphthine synthase">
    <location>
        <begin position="1"/>
        <end position="250"/>
    </location>
</feature>
<feature type="binding site" evidence="1">
    <location>
        <position position="9"/>
    </location>
    <ligand>
        <name>S-adenosyl-L-methionine</name>
        <dbReference type="ChEBI" id="CHEBI:59789"/>
    </ligand>
</feature>
<feature type="binding site" evidence="1">
    <location>
        <position position="85"/>
    </location>
    <ligand>
        <name>S-adenosyl-L-methionine</name>
        <dbReference type="ChEBI" id="CHEBI:59789"/>
    </ligand>
</feature>
<feature type="binding site" evidence="1">
    <location>
        <position position="88"/>
    </location>
    <ligand>
        <name>S-adenosyl-L-methionine</name>
        <dbReference type="ChEBI" id="CHEBI:59789"/>
    </ligand>
</feature>
<feature type="binding site" evidence="1">
    <location>
        <begin position="113"/>
        <end position="114"/>
    </location>
    <ligand>
        <name>S-adenosyl-L-methionine</name>
        <dbReference type="ChEBI" id="CHEBI:59789"/>
    </ligand>
</feature>
<feature type="binding site" evidence="1">
    <location>
        <position position="165"/>
    </location>
    <ligand>
        <name>S-adenosyl-L-methionine</name>
        <dbReference type="ChEBI" id="CHEBI:59789"/>
    </ligand>
</feature>
<feature type="binding site" evidence="1">
    <location>
        <position position="202"/>
    </location>
    <ligand>
        <name>S-adenosyl-L-methionine</name>
        <dbReference type="ChEBI" id="CHEBI:59789"/>
    </ligand>
</feature>
<feature type="binding site" evidence="1">
    <location>
        <position position="227"/>
    </location>
    <ligand>
        <name>S-adenosyl-L-methionine</name>
        <dbReference type="ChEBI" id="CHEBI:59789"/>
    </ligand>
</feature>
<evidence type="ECO:0000255" key="1">
    <source>
        <dbReference type="HAMAP-Rule" id="MF_01084"/>
    </source>
</evidence>